<dbReference type="EC" id="6.2.1.48" evidence="1"/>
<dbReference type="EMBL" id="AJ508908">
    <property type="protein sequence ID" value="CAD48581.1"/>
    <property type="molecule type" value="Genomic_DNA"/>
</dbReference>
<dbReference type="SMR" id="Q8GB18"/>
<dbReference type="BRENDA" id="6.2.1.48">
    <property type="organism ID" value="5048"/>
</dbReference>
<dbReference type="UniPathway" id="UPA00117"/>
<dbReference type="GO" id="GO:0016878">
    <property type="term" value="F:acid-thiol ligase activity"/>
    <property type="evidence" value="ECO:0007669"/>
    <property type="project" value="InterPro"/>
</dbReference>
<dbReference type="GO" id="GO:0051108">
    <property type="term" value="F:carnitine-CoA ligase activity"/>
    <property type="evidence" value="ECO:0007669"/>
    <property type="project" value="InterPro"/>
</dbReference>
<dbReference type="GO" id="GO:0051109">
    <property type="term" value="F:crotonobetaine-CoA ligase activity"/>
    <property type="evidence" value="ECO:0007669"/>
    <property type="project" value="InterPro"/>
</dbReference>
<dbReference type="GO" id="GO:0009437">
    <property type="term" value="P:carnitine metabolic process"/>
    <property type="evidence" value="ECO:0007669"/>
    <property type="project" value="UniProtKB-UniRule"/>
</dbReference>
<dbReference type="CDD" id="cd05934">
    <property type="entry name" value="FACL_DitJ_like"/>
    <property type="match status" value="1"/>
</dbReference>
<dbReference type="FunFam" id="3.30.300.30:FF:000011">
    <property type="entry name" value="Crotonobetaine/carnitine--CoA ligase"/>
    <property type="match status" value="1"/>
</dbReference>
<dbReference type="Gene3D" id="3.30.300.30">
    <property type="match status" value="1"/>
</dbReference>
<dbReference type="Gene3D" id="3.40.50.12780">
    <property type="entry name" value="N-terminal domain of ligase-like"/>
    <property type="match status" value="1"/>
</dbReference>
<dbReference type="HAMAP" id="MF_01524">
    <property type="entry name" value="CaiC"/>
    <property type="match status" value="1"/>
</dbReference>
<dbReference type="InterPro" id="IPR025110">
    <property type="entry name" value="AMP-bd_C"/>
</dbReference>
<dbReference type="InterPro" id="IPR045851">
    <property type="entry name" value="AMP-bd_C_sf"/>
</dbReference>
<dbReference type="InterPro" id="IPR020845">
    <property type="entry name" value="AMP-binding_CS"/>
</dbReference>
<dbReference type="InterPro" id="IPR000873">
    <property type="entry name" value="AMP-dep_synth/lig_dom"/>
</dbReference>
<dbReference type="InterPro" id="IPR042099">
    <property type="entry name" value="ANL_N_sf"/>
</dbReference>
<dbReference type="InterPro" id="IPR050237">
    <property type="entry name" value="ATP-dep_AMP-bd_enzyme"/>
</dbReference>
<dbReference type="InterPro" id="IPR023456">
    <property type="entry name" value="CaiC"/>
</dbReference>
<dbReference type="NCBIfam" id="NF005947">
    <property type="entry name" value="PRK08008.1"/>
    <property type="match status" value="1"/>
</dbReference>
<dbReference type="PANTHER" id="PTHR43767">
    <property type="entry name" value="LONG-CHAIN-FATTY-ACID--COA LIGASE"/>
    <property type="match status" value="1"/>
</dbReference>
<dbReference type="PANTHER" id="PTHR43767:SF1">
    <property type="entry name" value="NONRIBOSOMAL PEPTIDE SYNTHASE PES1 (EUROFUNG)-RELATED"/>
    <property type="match status" value="1"/>
</dbReference>
<dbReference type="Pfam" id="PF00501">
    <property type="entry name" value="AMP-binding"/>
    <property type="match status" value="1"/>
</dbReference>
<dbReference type="Pfam" id="PF13193">
    <property type="entry name" value="AMP-binding_C"/>
    <property type="match status" value="1"/>
</dbReference>
<dbReference type="SUPFAM" id="SSF56801">
    <property type="entry name" value="Acetyl-CoA synthetase-like"/>
    <property type="match status" value="1"/>
</dbReference>
<dbReference type="PROSITE" id="PS00455">
    <property type="entry name" value="AMP_BINDING"/>
    <property type="match status" value="1"/>
</dbReference>
<name>CAIC_PROSL</name>
<keyword id="KW-0436">Ligase</keyword>
<feature type="chain" id="PRO_0000193068" description="Crotonobetaine/carnitine--CoA ligase">
    <location>
        <begin position="1"/>
        <end position="518"/>
    </location>
</feature>
<proteinExistence type="inferred from homology"/>
<evidence type="ECO:0000255" key="1">
    <source>
        <dbReference type="HAMAP-Rule" id="MF_01524"/>
    </source>
</evidence>
<sequence>MDVIGRQHLRQMWDDLAEVYDKKTALIFESAQGKVRQFSYSELNEEINRAANLFHACGIKKGDHVALHLDNCPEFFFCWFGLAKIGAVMVPINARFMYEESAWIINHCQAHFVVTSDNFSPIYQPMLHDKHSPLTQLFLITENCLPTEQGVVDFLSEKAKHPVTLNHHTPLSVDDTAEILFTSGTTSQPKGVVITHYNLRIAGYYSSWQNALREDDIYLTVMPAFHIDCQCTASLPAYSVGATIVLLEKYSARASWKQILKYQATVTECIPMMMRTSMAQPVSPDEKQHKLREVMSYLNLADKEKDASIERLNVRLLTSHGMTETIVGLIGDRPGDKRRWPSIGRPGFCYQAQIRDKQNQQVPNGVVGEICVKGEAGKTLFKEYYNRPDATEKALEPDGWLHTGDYGYRDDEGFFYFVDRSCNMIKRGGENVSCIEIENIIASHPKIQDVAVIGVPDDIRDEAIKAFVVLVDGETLSEEAFFAFCEQNMAKFKVPSAVEFKQGLPRNCSGKVIKKHLQ</sequence>
<protein>
    <recommendedName>
        <fullName evidence="1">Crotonobetaine/carnitine--CoA ligase</fullName>
        <ecNumber evidence="1">6.2.1.48</ecNumber>
    </recommendedName>
</protein>
<gene>
    <name evidence="1" type="primary">caiC</name>
</gene>
<comment type="function">
    <text evidence="1">Catalyzes the transfer of CoA to carnitine, generating the initial carnitinyl-CoA needed for the CaiB reaction cycle. Also has activity toward crotonobetaine and gamma-butyrobetaine.</text>
</comment>
<comment type="catalytic activity">
    <reaction evidence="1">
        <text>4-(trimethylamino)butanoate + ATP + CoA = 4-(trimethylamino)butanoyl-CoA + AMP + diphosphate</text>
        <dbReference type="Rhea" id="RHEA:55960"/>
        <dbReference type="ChEBI" id="CHEBI:16244"/>
        <dbReference type="ChEBI" id="CHEBI:30616"/>
        <dbReference type="ChEBI" id="CHEBI:33019"/>
        <dbReference type="ChEBI" id="CHEBI:57287"/>
        <dbReference type="ChEBI" id="CHEBI:61513"/>
        <dbReference type="ChEBI" id="CHEBI:456215"/>
        <dbReference type="EC" id="6.2.1.48"/>
    </reaction>
</comment>
<comment type="catalytic activity">
    <reaction evidence="1">
        <text>crotonobetaine + ATP + CoA = crotonobetainyl-CoA + AMP + diphosphate</text>
        <dbReference type="Rhea" id="RHEA:30079"/>
        <dbReference type="ChEBI" id="CHEBI:17237"/>
        <dbReference type="ChEBI" id="CHEBI:30616"/>
        <dbReference type="ChEBI" id="CHEBI:33019"/>
        <dbReference type="ChEBI" id="CHEBI:57287"/>
        <dbReference type="ChEBI" id="CHEBI:60933"/>
        <dbReference type="ChEBI" id="CHEBI:456215"/>
        <dbReference type="EC" id="6.2.1.48"/>
    </reaction>
</comment>
<comment type="catalytic activity">
    <reaction evidence="1">
        <text>(R)-carnitine + ATP + CoA = (R)-carnitinyl-CoA + AMP + diphosphate</text>
        <dbReference type="Rhea" id="RHEA:28514"/>
        <dbReference type="ChEBI" id="CHEBI:16347"/>
        <dbReference type="ChEBI" id="CHEBI:30616"/>
        <dbReference type="ChEBI" id="CHEBI:33019"/>
        <dbReference type="ChEBI" id="CHEBI:57287"/>
        <dbReference type="ChEBI" id="CHEBI:60932"/>
        <dbReference type="ChEBI" id="CHEBI:456215"/>
        <dbReference type="EC" id="6.2.1.48"/>
    </reaction>
</comment>
<comment type="pathway">
    <text evidence="1">Amine and polyamine metabolism; carnitine metabolism.</text>
</comment>
<comment type="similarity">
    <text evidence="1">Belongs to the ATP-dependent AMP-binding enzyme family.</text>
</comment>
<accession>Q8GB18</accession>
<reference key="1">
    <citation type="submission" date="2002-09" db="EMBL/GenBank/DDBJ databases">
        <title>Cai locus and corresponding enzymes of Proteus sp.</title>
        <authorList>
            <person name="Engemann C."/>
            <person name="Elssner T."/>
            <person name="Pfeifer S."/>
            <person name="Krumbholz C."/>
            <person name="Maier T."/>
            <person name="Kleber H.-P."/>
        </authorList>
    </citation>
    <scope>NUCLEOTIDE SEQUENCE [GENOMIC DNA]</scope>
</reference>
<organism>
    <name type="scientific">Proteus sp. (strain LE138)</name>
    <dbReference type="NCBI Taxonomy" id="217617"/>
    <lineage>
        <taxon>Bacteria</taxon>
        <taxon>Pseudomonadati</taxon>
        <taxon>Pseudomonadota</taxon>
        <taxon>Gammaproteobacteria</taxon>
        <taxon>Enterobacterales</taxon>
        <taxon>Morganellaceae</taxon>
        <taxon>Proteus</taxon>
    </lineage>
</organism>